<organism>
    <name type="scientific">Rickettsia akari (strain Hartford)</name>
    <dbReference type="NCBI Taxonomy" id="293614"/>
    <lineage>
        <taxon>Bacteria</taxon>
        <taxon>Pseudomonadati</taxon>
        <taxon>Pseudomonadota</taxon>
        <taxon>Alphaproteobacteria</taxon>
        <taxon>Rickettsiales</taxon>
        <taxon>Rickettsiaceae</taxon>
        <taxon>Rickettsieae</taxon>
        <taxon>Rickettsia</taxon>
        <taxon>spotted fever group</taxon>
    </lineage>
</organism>
<comment type="similarity">
    <text evidence="1">Belongs to the bacterial ribosomal protein bL34 family.</text>
</comment>
<protein>
    <recommendedName>
        <fullName evidence="1">Large ribosomal subunit protein bL34</fullName>
    </recommendedName>
    <alternativeName>
        <fullName evidence="3">50S ribosomal protein L34</fullName>
    </alternativeName>
</protein>
<name>RL34_RICAH</name>
<proteinExistence type="inferred from homology"/>
<feature type="chain" id="PRO_1000013429" description="Large ribosomal subunit protein bL34">
    <location>
        <begin position="1"/>
        <end position="44"/>
    </location>
</feature>
<feature type="region of interest" description="Disordered" evidence="2">
    <location>
        <begin position="16"/>
        <end position="44"/>
    </location>
</feature>
<feature type="compositionally biased region" description="Basic residues" evidence="2">
    <location>
        <begin position="30"/>
        <end position="44"/>
    </location>
</feature>
<accession>A8GP90</accession>
<sequence length="44" mass="5172">MKRTFQPSNLVRKRRHGFRARMATPTGRAILKKRRAKGRHKLSA</sequence>
<dbReference type="EMBL" id="CP000847">
    <property type="protein sequence ID" value="ABV75215.1"/>
    <property type="molecule type" value="Genomic_DNA"/>
</dbReference>
<dbReference type="RefSeq" id="WP_012149845.1">
    <property type="nucleotide sequence ID" value="NC_009881.1"/>
</dbReference>
<dbReference type="SMR" id="A8GP90"/>
<dbReference type="STRING" id="293614.A1C_04775"/>
<dbReference type="KEGG" id="rak:A1C_04775"/>
<dbReference type="eggNOG" id="COG0230">
    <property type="taxonomic scope" value="Bacteria"/>
</dbReference>
<dbReference type="HOGENOM" id="CLU_129938_2_0_5"/>
<dbReference type="Proteomes" id="UP000006830">
    <property type="component" value="Chromosome"/>
</dbReference>
<dbReference type="GO" id="GO:1990904">
    <property type="term" value="C:ribonucleoprotein complex"/>
    <property type="evidence" value="ECO:0007669"/>
    <property type="project" value="UniProtKB-KW"/>
</dbReference>
<dbReference type="GO" id="GO:0005840">
    <property type="term" value="C:ribosome"/>
    <property type="evidence" value="ECO:0007669"/>
    <property type="project" value="UniProtKB-KW"/>
</dbReference>
<dbReference type="GO" id="GO:0003735">
    <property type="term" value="F:structural constituent of ribosome"/>
    <property type="evidence" value="ECO:0007669"/>
    <property type="project" value="InterPro"/>
</dbReference>
<dbReference type="GO" id="GO:0006412">
    <property type="term" value="P:translation"/>
    <property type="evidence" value="ECO:0007669"/>
    <property type="project" value="UniProtKB-UniRule"/>
</dbReference>
<dbReference type="FunFam" id="1.10.287.3980:FF:000001">
    <property type="entry name" value="Mitochondrial ribosomal protein L34"/>
    <property type="match status" value="1"/>
</dbReference>
<dbReference type="Gene3D" id="1.10.287.3980">
    <property type="match status" value="1"/>
</dbReference>
<dbReference type="HAMAP" id="MF_00391">
    <property type="entry name" value="Ribosomal_bL34"/>
    <property type="match status" value="1"/>
</dbReference>
<dbReference type="InterPro" id="IPR000271">
    <property type="entry name" value="Ribosomal_bL34"/>
</dbReference>
<dbReference type="InterPro" id="IPR020939">
    <property type="entry name" value="Ribosomal_bL34_CS"/>
</dbReference>
<dbReference type="NCBIfam" id="TIGR01030">
    <property type="entry name" value="rpmH_bact"/>
    <property type="match status" value="1"/>
</dbReference>
<dbReference type="PANTHER" id="PTHR14503:SF4">
    <property type="entry name" value="LARGE RIBOSOMAL SUBUNIT PROTEIN BL34M"/>
    <property type="match status" value="1"/>
</dbReference>
<dbReference type="PANTHER" id="PTHR14503">
    <property type="entry name" value="MITOCHONDRIAL RIBOSOMAL PROTEIN 34 FAMILY MEMBER"/>
    <property type="match status" value="1"/>
</dbReference>
<dbReference type="Pfam" id="PF00468">
    <property type="entry name" value="Ribosomal_L34"/>
    <property type="match status" value="1"/>
</dbReference>
<dbReference type="PROSITE" id="PS00784">
    <property type="entry name" value="RIBOSOMAL_L34"/>
    <property type="match status" value="1"/>
</dbReference>
<keyword id="KW-0687">Ribonucleoprotein</keyword>
<keyword id="KW-0689">Ribosomal protein</keyword>
<evidence type="ECO:0000255" key="1">
    <source>
        <dbReference type="HAMAP-Rule" id="MF_00391"/>
    </source>
</evidence>
<evidence type="ECO:0000256" key="2">
    <source>
        <dbReference type="SAM" id="MobiDB-lite"/>
    </source>
</evidence>
<evidence type="ECO:0000305" key="3"/>
<gene>
    <name evidence="1" type="primary">rpmH</name>
    <name type="ordered locus">A1C_04775</name>
</gene>
<reference key="1">
    <citation type="submission" date="2007-09" db="EMBL/GenBank/DDBJ databases">
        <title>Complete genome sequence of Rickettsia akari.</title>
        <authorList>
            <person name="Madan A."/>
            <person name="Fahey J."/>
            <person name="Helton E."/>
            <person name="Ketteman M."/>
            <person name="Madan A."/>
            <person name="Rodrigues S."/>
            <person name="Sanchez A."/>
            <person name="Whiting M."/>
            <person name="Dasch G."/>
            <person name="Eremeeva M."/>
        </authorList>
    </citation>
    <scope>NUCLEOTIDE SEQUENCE [LARGE SCALE GENOMIC DNA]</scope>
    <source>
        <strain>Hartford</strain>
    </source>
</reference>